<reference key="1">
    <citation type="submission" date="2007-10" db="EMBL/GenBank/DDBJ databases">
        <title>Brucella canis ATCC 23365 whole genome shotgun sequencing project.</title>
        <authorList>
            <person name="Setubal J.C."/>
            <person name="Bowns C."/>
            <person name="Boyle S."/>
            <person name="Crasta O.R."/>
            <person name="Czar M.J."/>
            <person name="Dharmanolla C."/>
            <person name="Gillespie J.J."/>
            <person name="Kenyon R.W."/>
            <person name="Lu J."/>
            <person name="Mane S."/>
            <person name="Mohapatra S."/>
            <person name="Nagrani S."/>
            <person name="Purkayastha A."/>
            <person name="Rajasimha H.K."/>
            <person name="Shallom J.M."/>
            <person name="Shallom S."/>
            <person name="Shukla M."/>
            <person name="Snyder E.E."/>
            <person name="Sobral B.W."/>
            <person name="Wattam A.R."/>
            <person name="Will R."/>
            <person name="Williams K."/>
            <person name="Yoo H."/>
            <person name="Bruce D."/>
            <person name="Detter C."/>
            <person name="Munk C."/>
            <person name="Brettin T.S."/>
        </authorList>
    </citation>
    <scope>NUCLEOTIDE SEQUENCE [LARGE SCALE GENOMIC DNA]</scope>
    <source>
        <strain>ATCC 23365 / NCTC 10854 / RM-666</strain>
    </source>
</reference>
<comment type="function">
    <text evidence="1">Catalyzes the formation of methylglyoxal from dihydroxyacetone phosphate.</text>
</comment>
<comment type="catalytic activity">
    <reaction evidence="1">
        <text>dihydroxyacetone phosphate = methylglyoxal + phosphate</text>
        <dbReference type="Rhea" id="RHEA:17937"/>
        <dbReference type="ChEBI" id="CHEBI:17158"/>
        <dbReference type="ChEBI" id="CHEBI:43474"/>
        <dbReference type="ChEBI" id="CHEBI:57642"/>
        <dbReference type="EC" id="4.2.3.3"/>
    </reaction>
</comment>
<comment type="similarity">
    <text evidence="1">Belongs to the methylglyoxal synthase family.</text>
</comment>
<dbReference type="EC" id="4.2.3.3" evidence="1"/>
<dbReference type="EMBL" id="CP000873">
    <property type="protein sequence ID" value="ABX64211.1"/>
    <property type="molecule type" value="Genomic_DNA"/>
</dbReference>
<dbReference type="RefSeq" id="WP_002965604.1">
    <property type="nucleotide sequence ID" value="NC_010104.1"/>
</dbReference>
<dbReference type="SMR" id="A9MCX4"/>
<dbReference type="KEGG" id="bcs:BCAN_B1069"/>
<dbReference type="HOGENOM" id="CLU_120420_1_0_5"/>
<dbReference type="PhylomeDB" id="A9MCX4"/>
<dbReference type="Proteomes" id="UP000001385">
    <property type="component" value="Chromosome II"/>
</dbReference>
<dbReference type="GO" id="GO:0005829">
    <property type="term" value="C:cytosol"/>
    <property type="evidence" value="ECO:0007669"/>
    <property type="project" value="TreeGrafter"/>
</dbReference>
<dbReference type="GO" id="GO:0008929">
    <property type="term" value="F:methylglyoxal synthase activity"/>
    <property type="evidence" value="ECO:0007669"/>
    <property type="project" value="UniProtKB-UniRule"/>
</dbReference>
<dbReference type="GO" id="GO:0019242">
    <property type="term" value="P:methylglyoxal biosynthetic process"/>
    <property type="evidence" value="ECO:0007669"/>
    <property type="project" value="UniProtKB-UniRule"/>
</dbReference>
<dbReference type="CDD" id="cd01422">
    <property type="entry name" value="MGS"/>
    <property type="match status" value="1"/>
</dbReference>
<dbReference type="Gene3D" id="3.40.50.1380">
    <property type="entry name" value="Methylglyoxal synthase-like domain"/>
    <property type="match status" value="1"/>
</dbReference>
<dbReference type="HAMAP" id="MF_00549">
    <property type="entry name" value="Methylglyoxal_synth"/>
    <property type="match status" value="1"/>
</dbReference>
<dbReference type="InterPro" id="IPR004363">
    <property type="entry name" value="Methylgl_synth"/>
</dbReference>
<dbReference type="InterPro" id="IPR018148">
    <property type="entry name" value="Methylglyoxal_synth_AS"/>
</dbReference>
<dbReference type="InterPro" id="IPR011607">
    <property type="entry name" value="MGS-like_dom"/>
</dbReference>
<dbReference type="InterPro" id="IPR036914">
    <property type="entry name" value="MGS-like_dom_sf"/>
</dbReference>
<dbReference type="NCBIfam" id="TIGR00160">
    <property type="entry name" value="MGSA"/>
    <property type="match status" value="1"/>
</dbReference>
<dbReference type="NCBIfam" id="NF003559">
    <property type="entry name" value="PRK05234.1"/>
    <property type="match status" value="1"/>
</dbReference>
<dbReference type="PANTHER" id="PTHR30492">
    <property type="entry name" value="METHYLGLYOXAL SYNTHASE"/>
    <property type="match status" value="1"/>
</dbReference>
<dbReference type="PANTHER" id="PTHR30492:SF0">
    <property type="entry name" value="METHYLGLYOXAL SYNTHASE"/>
    <property type="match status" value="1"/>
</dbReference>
<dbReference type="Pfam" id="PF02142">
    <property type="entry name" value="MGS"/>
    <property type="match status" value="1"/>
</dbReference>
<dbReference type="PIRSF" id="PIRSF006614">
    <property type="entry name" value="Methylglyox_syn"/>
    <property type="match status" value="1"/>
</dbReference>
<dbReference type="SMART" id="SM00851">
    <property type="entry name" value="MGS"/>
    <property type="match status" value="1"/>
</dbReference>
<dbReference type="SUPFAM" id="SSF52335">
    <property type="entry name" value="Methylglyoxal synthase-like"/>
    <property type="match status" value="1"/>
</dbReference>
<dbReference type="PROSITE" id="PS01335">
    <property type="entry name" value="METHYLGLYOXAL_SYNTH"/>
    <property type="match status" value="1"/>
</dbReference>
<dbReference type="PROSITE" id="PS51855">
    <property type="entry name" value="MGS"/>
    <property type="match status" value="1"/>
</dbReference>
<organism>
    <name type="scientific">Brucella canis (strain ATCC 23365 / NCTC 10854 / RM-666)</name>
    <dbReference type="NCBI Taxonomy" id="483179"/>
    <lineage>
        <taxon>Bacteria</taxon>
        <taxon>Pseudomonadati</taxon>
        <taxon>Pseudomonadota</taxon>
        <taxon>Alphaproteobacteria</taxon>
        <taxon>Hyphomicrobiales</taxon>
        <taxon>Brucellaceae</taxon>
        <taxon>Brucella/Ochrobactrum group</taxon>
        <taxon>Brucella</taxon>
    </lineage>
</organism>
<feature type="chain" id="PRO_1000081951" description="Methylglyoxal synthase">
    <location>
        <begin position="1"/>
        <end position="125"/>
    </location>
</feature>
<feature type="domain" description="MGS-like" evidence="1">
    <location>
        <begin position="1"/>
        <end position="125"/>
    </location>
</feature>
<feature type="active site" description="Proton donor/acceptor" evidence="1">
    <location>
        <position position="65"/>
    </location>
</feature>
<feature type="binding site" evidence="1">
    <location>
        <position position="12"/>
    </location>
    <ligand>
        <name>substrate</name>
    </ligand>
</feature>
<feature type="binding site" evidence="1">
    <location>
        <position position="16"/>
    </location>
    <ligand>
        <name>substrate</name>
    </ligand>
</feature>
<feature type="binding site" evidence="1">
    <location>
        <begin position="38"/>
        <end position="41"/>
    </location>
    <ligand>
        <name>substrate</name>
    </ligand>
</feature>
<feature type="binding site" evidence="1">
    <location>
        <begin position="59"/>
        <end position="60"/>
    </location>
    <ligand>
        <name>substrate</name>
    </ligand>
</feature>
<feature type="binding site" evidence="1">
    <location>
        <position position="92"/>
    </location>
    <ligand>
        <name>substrate</name>
    </ligand>
</feature>
<proteinExistence type="inferred from homology"/>
<evidence type="ECO:0000255" key="1">
    <source>
        <dbReference type="HAMAP-Rule" id="MF_00549"/>
    </source>
</evidence>
<gene>
    <name evidence="1" type="primary">mgsA</name>
    <name type="ordered locus">BCAN_B1069</name>
</gene>
<keyword id="KW-0456">Lyase</keyword>
<keyword id="KW-1185">Reference proteome</keyword>
<accession>A9MCX4</accession>
<name>MGSA_BRUC2</name>
<sequence>MTQRLRIALIAHDQKKDDMVAFARAHEQALSRYDIVATGTTGGLIQDACPSLNIHRVKSGPLGGDQQIGAMIAEGTVEVLIFFIDPLSPLPHDVDVKALTRLGSVYDIPMALNRATAEKLVRALD</sequence>
<protein>
    <recommendedName>
        <fullName evidence="1">Methylglyoxal synthase</fullName>
        <shortName evidence="1">MGS</shortName>
        <ecNumber evidence="1">4.2.3.3</ecNumber>
    </recommendedName>
</protein>